<dbReference type="EC" id="2.1.2.10" evidence="1"/>
<dbReference type="EMBL" id="CT573213">
    <property type="protein sequence ID" value="CAJ63788.1"/>
    <property type="molecule type" value="Genomic_DNA"/>
</dbReference>
<dbReference type="RefSeq" id="WP_011606253.1">
    <property type="nucleotide sequence ID" value="NC_008278.1"/>
</dbReference>
<dbReference type="SMR" id="Q0RFF6"/>
<dbReference type="STRING" id="326424.FRAAL5148"/>
<dbReference type="KEGG" id="fal:FRAAL5148"/>
<dbReference type="eggNOG" id="COG0404">
    <property type="taxonomic scope" value="Bacteria"/>
</dbReference>
<dbReference type="HOGENOM" id="CLU_007884_10_2_11"/>
<dbReference type="OrthoDB" id="9774591at2"/>
<dbReference type="Proteomes" id="UP000000657">
    <property type="component" value="Chromosome"/>
</dbReference>
<dbReference type="GO" id="GO:0005829">
    <property type="term" value="C:cytosol"/>
    <property type="evidence" value="ECO:0007669"/>
    <property type="project" value="TreeGrafter"/>
</dbReference>
<dbReference type="GO" id="GO:0005960">
    <property type="term" value="C:glycine cleavage complex"/>
    <property type="evidence" value="ECO:0007669"/>
    <property type="project" value="InterPro"/>
</dbReference>
<dbReference type="GO" id="GO:0004047">
    <property type="term" value="F:aminomethyltransferase activity"/>
    <property type="evidence" value="ECO:0007669"/>
    <property type="project" value="UniProtKB-UniRule"/>
</dbReference>
<dbReference type="GO" id="GO:0008483">
    <property type="term" value="F:transaminase activity"/>
    <property type="evidence" value="ECO:0007669"/>
    <property type="project" value="UniProtKB-KW"/>
</dbReference>
<dbReference type="GO" id="GO:0019464">
    <property type="term" value="P:glycine decarboxylation via glycine cleavage system"/>
    <property type="evidence" value="ECO:0007669"/>
    <property type="project" value="UniProtKB-UniRule"/>
</dbReference>
<dbReference type="Gene3D" id="3.30.1360.120">
    <property type="entry name" value="Probable tRNA modification gtpase trme, domain 1"/>
    <property type="match status" value="1"/>
</dbReference>
<dbReference type="HAMAP" id="MF_00259">
    <property type="entry name" value="GcvT"/>
    <property type="match status" value="1"/>
</dbReference>
<dbReference type="InterPro" id="IPR006223">
    <property type="entry name" value="GCS_T"/>
</dbReference>
<dbReference type="InterPro" id="IPR022903">
    <property type="entry name" value="GCS_T_bac"/>
</dbReference>
<dbReference type="InterPro" id="IPR013977">
    <property type="entry name" value="GCST_C"/>
</dbReference>
<dbReference type="InterPro" id="IPR006222">
    <property type="entry name" value="GCV_T_N"/>
</dbReference>
<dbReference type="InterPro" id="IPR028896">
    <property type="entry name" value="GcvT/YgfZ/DmdA"/>
</dbReference>
<dbReference type="InterPro" id="IPR029043">
    <property type="entry name" value="GcvT/YgfZ_C"/>
</dbReference>
<dbReference type="InterPro" id="IPR027266">
    <property type="entry name" value="TrmE/GcvT_dom1"/>
</dbReference>
<dbReference type="NCBIfam" id="TIGR00528">
    <property type="entry name" value="gcvT"/>
    <property type="match status" value="1"/>
</dbReference>
<dbReference type="NCBIfam" id="NF001567">
    <property type="entry name" value="PRK00389.1"/>
    <property type="match status" value="1"/>
</dbReference>
<dbReference type="PANTHER" id="PTHR43757">
    <property type="entry name" value="AMINOMETHYLTRANSFERASE"/>
    <property type="match status" value="1"/>
</dbReference>
<dbReference type="PANTHER" id="PTHR43757:SF2">
    <property type="entry name" value="AMINOMETHYLTRANSFERASE, MITOCHONDRIAL"/>
    <property type="match status" value="1"/>
</dbReference>
<dbReference type="Pfam" id="PF01571">
    <property type="entry name" value="GCV_T"/>
    <property type="match status" value="1"/>
</dbReference>
<dbReference type="Pfam" id="PF08669">
    <property type="entry name" value="GCV_T_C"/>
    <property type="match status" value="1"/>
</dbReference>
<dbReference type="PIRSF" id="PIRSF006487">
    <property type="entry name" value="GcvT"/>
    <property type="match status" value="1"/>
</dbReference>
<dbReference type="SUPFAM" id="SSF101790">
    <property type="entry name" value="Aminomethyltransferase beta-barrel domain"/>
    <property type="match status" value="1"/>
</dbReference>
<dbReference type="SUPFAM" id="SSF103025">
    <property type="entry name" value="Folate-binding domain"/>
    <property type="match status" value="1"/>
</dbReference>
<accession>Q0RFF6</accession>
<proteinExistence type="inferred from homology"/>
<organism>
    <name type="scientific">Frankia alni (strain DSM 45986 / CECT 9034 / ACN14a)</name>
    <dbReference type="NCBI Taxonomy" id="326424"/>
    <lineage>
        <taxon>Bacteria</taxon>
        <taxon>Bacillati</taxon>
        <taxon>Actinomycetota</taxon>
        <taxon>Actinomycetes</taxon>
        <taxon>Frankiales</taxon>
        <taxon>Frankiaceae</taxon>
        <taxon>Frankia</taxon>
    </lineage>
</organism>
<name>GCST_FRAAA</name>
<reference key="1">
    <citation type="journal article" date="2007" name="Genome Res.">
        <title>Genome characteristics of facultatively symbiotic Frankia sp. strains reflect host range and host plant biogeography.</title>
        <authorList>
            <person name="Normand P."/>
            <person name="Lapierre P."/>
            <person name="Tisa L.S."/>
            <person name="Gogarten J.P."/>
            <person name="Alloisio N."/>
            <person name="Bagnarol E."/>
            <person name="Bassi C.A."/>
            <person name="Berry A.M."/>
            <person name="Bickhart D.M."/>
            <person name="Choisne N."/>
            <person name="Couloux A."/>
            <person name="Cournoyer B."/>
            <person name="Cruveiller S."/>
            <person name="Daubin V."/>
            <person name="Demange N."/>
            <person name="Francino M.P."/>
            <person name="Goltsman E."/>
            <person name="Huang Y."/>
            <person name="Kopp O.R."/>
            <person name="Labarre L."/>
            <person name="Lapidus A."/>
            <person name="Lavire C."/>
            <person name="Marechal J."/>
            <person name="Martinez M."/>
            <person name="Mastronunzio J.E."/>
            <person name="Mullin B.C."/>
            <person name="Niemann J."/>
            <person name="Pujic P."/>
            <person name="Rawnsley T."/>
            <person name="Rouy Z."/>
            <person name="Schenowitz C."/>
            <person name="Sellstedt A."/>
            <person name="Tavares F."/>
            <person name="Tomkins J.P."/>
            <person name="Vallenet D."/>
            <person name="Valverde C."/>
            <person name="Wall L.G."/>
            <person name="Wang Y."/>
            <person name="Medigue C."/>
            <person name="Benson D.R."/>
        </authorList>
    </citation>
    <scope>NUCLEOTIDE SEQUENCE [LARGE SCALE GENOMIC DNA]</scope>
    <source>
        <strain>DSM 45986 / CECT 9034 / ACN14a</strain>
    </source>
</reference>
<gene>
    <name evidence="1" type="primary">gcvT</name>
    <name type="ordered locus">FRAAL5148</name>
</gene>
<protein>
    <recommendedName>
        <fullName evidence="1">Aminomethyltransferase</fullName>
        <ecNumber evidence="1">2.1.2.10</ecNumber>
    </recommendedName>
    <alternativeName>
        <fullName evidence="1">Glycine cleavage system T protein</fullName>
    </alternativeName>
</protein>
<keyword id="KW-0032">Aminotransferase</keyword>
<keyword id="KW-1185">Reference proteome</keyword>
<keyword id="KW-0808">Transferase</keyword>
<sequence>MADLRRSPLYGRHVDLGAKMAGFGGWEMPIEYAGRGVLAEHQAVRGAVGIFDVSHLGKAEVTGAGAAEFVNACLSNDLGRIAPGQAQYTLCCNDEGGVVDDLIAYLFSGERVLLVPNAANNAEVVARLAAAAPAGVSVTDRHTGFGVLAVQGPAAPTLVAALGLPTDGAYMSFVEAAWKGRPVIVCRSGYTGERGYELLPRWDDTPALWDALFAAGEGLGASPVGLGARDTLRTEMGYPLHGQDLSPTITPVQARSGWAVGWGKERFWGREALLAERAAGPARLLWGLASTGRAIPRPHMPVTAADGAPVGEVTSGTFSPTLRQGIGLALLDRGVAEGDTVNVDVRGRPGPMTVVRPPFVPSTPR</sequence>
<feature type="chain" id="PRO_1000047665" description="Aminomethyltransferase">
    <location>
        <begin position="1"/>
        <end position="365"/>
    </location>
</feature>
<comment type="function">
    <text evidence="1">The glycine cleavage system catalyzes the degradation of glycine.</text>
</comment>
<comment type="catalytic activity">
    <reaction evidence="1">
        <text>N(6)-[(R)-S(8)-aminomethyldihydrolipoyl]-L-lysyl-[protein] + (6S)-5,6,7,8-tetrahydrofolate = N(6)-[(R)-dihydrolipoyl]-L-lysyl-[protein] + (6R)-5,10-methylene-5,6,7,8-tetrahydrofolate + NH4(+)</text>
        <dbReference type="Rhea" id="RHEA:16945"/>
        <dbReference type="Rhea" id="RHEA-COMP:10475"/>
        <dbReference type="Rhea" id="RHEA-COMP:10492"/>
        <dbReference type="ChEBI" id="CHEBI:15636"/>
        <dbReference type="ChEBI" id="CHEBI:28938"/>
        <dbReference type="ChEBI" id="CHEBI:57453"/>
        <dbReference type="ChEBI" id="CHEBI:83100"/>
        <dbReference type="ChEBI" id="CHEBI:83143"/>
        <dbReference type="EC" id="2.1.2.10"/>
    </reaction>
</comment>
<comment type="subunit">
    <text evidence="1">The glycine cleavage system is composed of four proteins: P, T, L and H.</text>
</comment>
<comment type="similarity">
    <text evidence="1">Belongs to the GcvT family.</text>
</comment>
<evidence type="ECO:0000255" key="1">
    <source>
        <dbReference type="HAMAP-Rule" id="MF_00259"/>
    </source>
</evidence>